<name>RFIP1_RAT</name>
<protein>
    <recommendedName>
        <fullName>Rab11 family-interacting protein 1</fullName>
        <shortName>Rab11-FIP1</shortName>
    </recommendedName>
    <alternativeName>
        <fullName>Rab-coupling protein</fullName>
    </alternativeName>
</protein>
<gene>
    <name evidence="1" type="primary">Rab11fip1</name>
    <name evidence="1" type="synonym">Rcp</name>
</gene>
<feature type="chain" id="PRO_0000234531" description="Rab11 family-interacting protein 1">
    <location>
        <begin position="1"/>
        <end position="648"/>
    </location>
</feature>
<feature type="domain" description="C2" evidence="3">
    <location>
        <begin position="1"/>
        <end position="129"/>
    </location>
</feature>
<feature type="domain" description="FIP-RBD" evidence="4">
    <location>
        <begin position="576"/>
        <end position="638"/>
    </location>
</feature>
<feature type="region of interest" description="Disordered" evidence="5">
    <location>
        <begin position="164"/>
        <end position="470"/>
    </location>
</feature>
<feature type="region of interest" description="Disordered" evidence="5">
    <location>
        <begin position="483"/>
        <end position="503"/>
    </location>
</feature>
<feature type="region of interest" description="Disordered" evidence="5">
    <location>
        <begin position="516"/>
        <end position="555"/>
    </location>
</feature>
<feature type="region of interest" description="Necessary for interaction with RAB4A and RAB11A, subcellular location and endosomal recycling" evidence="1">
    <location>
        <begin position="584"/>
        <end position="648"/>
    </location>
</feature>
<feature type="compositionally biased region" description="Basic and acidic residues" evidence="5">
    <location>
        <begin position="164"/>
        <end position="188"/>
    </location>
</feature>
<feature type="compositionally biased region" description="Polar residues" evidence="5">
    <location>
        <begin position="189"/>
        <end position="201"/>
    </location>
</feature>
<feature type="compositionally biased region" description="Polar residues" evidence="5">
    <location>
        <begin position="227"/>
        <end position="242"/>
    </location>
</feature>
<feature type="compositionally biased region" description="Polar residues" evidence="5">
    <location>
        <begin position="271"/>
        <end position="296"/>
    </location>
</feature>
<feature type="compositionally biased region" description="Polar residues" evidence="5">
    <location>
        <begin position="314"/>
        <end position="323"/>
    </location>
</feature>
<feature type="compositionally biased region" description="Basic and acidic residues" evidence="5">
    <location>
        <begin position="381"/>
        <end position="394"/>
    </location>
</feature>
<feature type="compositionally biased region" description="Basic and acidic residues" evidence="5">
    <location>
        <begin position="422"/>
        <end position="436"/>
    </location>
</feature>
<feature type="compositionally biased region" description="Basic and acidic residues" evidence="5">
    <location>
        <begin position="445"/>
        <end position="454"/>
    </location>
</feature>
<feature type="modified residue" description="Phosphoserine" evidence="6">
    <location>
        <position position="205"/>
    </location>
</feature>
<feature type="modified residue" description="Phosphoserine" evidence="1">
    <location>
        <position position="209"/>
    </location>
</feature>
<feature type="modified residue" description="Phosphoserine" evidence="1">
    <location>
        <position position="237"/>
    </location>
</feature>
<feature type="modified residue" description="Phosphoserine" evidence="1">
    <location>
        <position position="304"/>
    </location>
</feature>
<feature type="modified residue" description="Phosphoserine" evidence="1">
    <location>
        <position position="319"/>
    </location>
</feature>
<feature type="modified residue" description="Phosphoserine" evidence="1">
    <location>
        <position position="343"/>
    </location>
</feature>
<feature type="modified residue" description="Phosphoserine" evidence="2">
    <location>
        <position position="345"/>
    </location>
</feature>
<feature type="modified residue" description="Phosphoserine" evidence="6">
    <location>
        <position position="347"/>
    </location>
</feature>
<feature type="modified residue" description="Phosphoserine" evidence="6">
    <location>
        <position position="349"/>
    </location>
</feature>
<feature type="modified residue" description="Phosphoserine" evidence="1">
    <location>
        <position position="360"/>
    </location>
</feature>
<feature type="modified residue" description="Phosphoserine" evidence="6">
    <location>
        <position position="361"/>
    </location>
</feature>
<feature type="modified residue" description="Phosphoserine" evidence="2">
    <location>
        <position position="386"/>
    </location>
</feature>
<feature type="modified residue" description="Phosphoserine" evidence="1">
    <location>
        <position position="438"/>
    </location>
</feature>
<accession>Q3B7T9</accession>
<dbReference type="EMBL" id="BC107469">
    <property type="protein sequence ID" value="AAI07470.1"/>
    <property type="molecule type" value="mRNA"/>
</dbReference>
<dbReference type="RefSeq" id="NP_001178484.1">
    <property type="nucleotide sequence ID" value="NM_001191555.1"/>
</dbReference>
<dbReference type="RefSeq" id="NP_001184170.1">
    <property type="nucleotide sequence ID" value="NM_001197241.1"/>
</dbReference>
<dbReference type="SMR" id="Q3B7T9"/>
<dbReference type="BioGRID" id="269960">
    <property type="interactions" value="1"/>
</dbReference>
<dbReference type="FunCoup" id="Q3B7T9">
    <property type="interactions" value="343"/>
</dbReference>
<dbReference type="IntAct" id="Q3B7T9">
    <property type="interactions" value="1"/>
</dbReference>
<dbReference type="STRING" id="10116.ENSRNOP00000073557"/>
<dbReference type="iPTMnet" id="Q3B7T9"/>
<dbReference type="jPOST" id="Q3B7T9"/>
<dbReference type="PaxDb" id="10116-ENSRNOP00000067013"/>
<dbReference type="Ensembl" id="ENSRNOT00000086082.3">
    <property type="protein sequence ID" value="ENSRNOP00000073557.1"/>
    <property type="gene ID" value="ENSRNOG00000058940.3"/>
</dbReference>
<dbReference type="GeneID" id="498650"/>
<dbReference type="KEGG" id="rno:498650"/>
<dbReference type="UCSC" id="RGD:1562965">
    <property type="organism name" value="rat"/>
</dbReference>
<dbReference type="AGR" id="RGD:1562965"/>
<dbReference type="CTD" id="80223"/>
<dbReference type="RGD" id="1562965">
    <property type="gene designation" value="Rab11fip1"/>
</dbReference>
<dbReference type="eggNOG" id="ENOG502QVT0">
    <property type="taxonomic scope" value="Eukaryota"/>
</dbReference>
<dbReference type="GeneTree" id="ENSGT00940000159649"/>
<dbReference type="HOGENOM" id="CLU_015242_0_0_1"/>
<dbReference type="InParanoid" id="Q3B7T9"/>
<dbReference type="OrthoDB" id="81882at9989"/>
<dbReference type="PRO" id="PR:Q3B7T9"/>
<dbReference type="Proteomes" id="UP000002494">
    <property type="component" value="Chromosome 16"/>
</dbReference>
<dbReference type="Bgee" id="ENSRNOG00000058940">
    <property type="expression patterns" value="Expressed in jejunum and 18 other cell types or tissues"/>
</dbReference>
<dbReference type="ExpressionAtlas" id="Q3B7T9">
    <property type="expression patterns" value="baseline and differential"/>
</dbReference>
<dbReference type="GO" id="GO:0043231">
    <property type="term" value="C:intracellular membrane-bounded organelle"/>
    <property type="evidence" value="ECO:0000318"/>
    <property type="project" value="GO_Central"/>
</dbReference>
<dbReference type="GO" id="GO:0016020">
    <property type="term" value="C:membrane"/>
    <property type="evidence" value="ECO:0007669"/>
    <property type="project" value="UniProtKB-KW"/>
</dbReference>
<dbReference type="GO" id="GO:0055037">
    <property type="term" value="C:recycling endosome"/>
    <property type="evidence" value="ECO:0007669"/>
    <property type="project" value="UniProtKB-SubCell"/>
</dbReference>
<dbReference type="GO" id="GO:0031267">
    <property type="term" value="F:small GTPase binding"/>
    <property type="evidence" value="ECO:0007669"/>
    <property type="project" value="InterPro"/>
</dbReference>
<dbReference type="GO" id="GO:0070164">
    <property type="term" value="P:negative regulation of adiponectin secretion"/>
    <property type="evidence" value="ECO:0000266"/>
    <property type="project" value="RGD"/>
</dbReference>
<dbReference type="GO" id="GO:0015031">
    <property type="term" value="P:protein transport"/>
    <property type="evidence" value="ECO:0007669"/>
    <property type="project" value="UniProtKB-KW"/>
</dbReference>
<dbReference type="GO" id="GO:0045055">
    <property type="term" value="P:regulated exocytosis"/>
    <property type="evidence" value="ECO:0000318"/>
    <property type="project" value="GO_Central"/>
</dbReference>
<dbReference type="CDD" id="cd08682">
    <property type="entry name" value="C2_Rab11-FIP_classI"/>
    <property type="match status" value="1"/>
</dbReference>
<dbReference type="FunFam" id="2.60.40.150:FF:000077">
    <property type="entry name" value="rab11 family-interacting protein 1 isoform X1"/>
    <property type="match status" value="1"/>
</dbReference>
<dbReference type="FunFam" id="1.20.5.2440:FF:000002">
    <property type="entry name" value="rab11 family-interacting protein 2 isoform X1"/>
    <property type="match status" value="1"/>
</dbReference>
<dbReference type="Gene3D" id="1.20.5.2440">
    <property type="match status" value="1"/>
</dbReference>
<dbReference type="Gene3D" id="2.60.40.150">
    <property type="entry name" value="C2 domain"/>
    <property type="match status" value="1"/>
</dbReference>
<dbReference type="InterPro" id="IPR000008">
    <property type="entry name" value="C2_dom"/>
</dbReference>
<dbReference type="InterPro" id="IPR035892">
    <property type="entry name" value="C2_domain_sf"/>
</dbReference>
<dbReference type="InterPro" id="IPR037245">
    <property type="entry name" value="FIP-RBD_C_sf"/>
</dbReference>
<dbReference type="InterPro" id="IPR037789">
    <property type="entry name" value="FIP_classI"/>
</dbReference>
<dbReference type="InterPro" id="IPR019018">
    <property type="entry name" value="Rab-bd_FIP-RBD"/>
</dbReference>
<dbReference type="PANTHER" id="PTHR15746:SF22">
    <property type="entry name" value="RAB11 FAMILY-INTERACTING PROTEIN 1"/>
    <property type="match status" value="1"/>
</dbReference>
<dbReference type="PANTHER" id="PTHR15746">
    <property type="entry name" value="RAB11-RELATED"/>
    <property type="match status" value="1"/>
</dbReference>
<dbReference type="Pfam" id="PF00168">
    <property type="entry name" value="C2"/>
    <property type="match status" value="1"/>
</dbReference>
<dbReference type="Pfam" id="PF09457">
    <property type="entry name" value="RBD-FIP"/>
    <property type="match status" value="1"/>
</dbReference>
<dbReference type="SMART" id="SM00239">
    <property type="entry name" value="C2"/>
    <property type="match status" value="1"/>
</dbReference>
<dbReference type="SUPFAM" id="SSF49562">
    <property type="entry name" value="C2 domain (Calcium/lipid-binding domain, CaLB)"/>
    <property type="match status" value="1"/>
</dbReference>
<dbReference type="SUPFAM" id="SSF144270">
    <property type="entry name" value="Eferin C-derminal domain-like"/>
    <property type="match status" value="1"/>
</dbReference>
<dbReference type="PROSITE" id="PS50004">
    <property type="entry name" value="C2"/>
    <property type="match status" value="1"/>
</dbReference>
<dbReference type="PROSITE" id="PS51511">
    <property type="entry name" value="FIP_RBD"/>
    <property type="match status" value="1"/>
</dbReference>
<comment type="function">
    <text evidence="1">A Rab11 effector protein involved in the endosomal recycling process. Also involved in controlling membrane trafficking along the phagocytic pathway and in phagocytosis. Interaction with RAB14 may function in the process of neurite formation.</text>
</comment>
<comment type="subunit">
    <text evidence="1">Homooligomer. Interacts with RAB11A, RAB11B, RAB25, RAB4A and RAB14.</text>
</comment>
<comment type="subcellular location">
    <subcellularLocation>
        <location evidence="1">Recycling endosome</location>
    </subcellularLocation>
    <subcellularLocation>
        <location evidence="1">Cytoplasmic vesicle</location>
    </subcellularLocation>
    <text evidence="1">Membrane-bound. RAB11A rather than RAB4A mediates localization in the endocytic recycling compartment (ERC). Colocalizes with RAB11A at phagosomes. Colocalizes with Rab11 and RAB14 on punctate vesicles.</text>
</comment>
<comment type="domain">
    <text evidence="1">The FIP-RBD is involved in the interaction with Rab proteins.</text>
</comment>
<keyword id="KW-0968">Cytoplasmic vesicle</keyword>
<keyword id="KW-0967">Endosome</keyword>
<keyword id="KW-0597">Phosphoprotein</keyword>
<keyword id="KW-0653">Protein transport</keyword>
<keyword id="KW-1185">Reference proteome</keyword>
<keyword id="KW-0813">Transport</keyword>
<reference key="1">
    <citation type="journal article" date="2004" name="Genome Res.">
        <title>The status, quality, and expansion of the NIH full-length cDNA project: the Mammalian Gene Collection (MGC).</title>
        <authorList>
            <consortium name="The MGC Project Team"/>
        </authorList>
    </citation>
    <scope>NUCLEOTIDE SEQUENCE [LARGE SCALE MRNA]</scope>
    <source>
        <tissue>Placenta</tissue>
    </source>
</reference>
<reference key="2">
    <citation type="journal article" date="2012" name="Nat. Commun.">
        <title>Quantitative maps of protein phosphorylation sites across 14 different rat organs and tissues.</title>
        <authorList>
            <person name="Lundby A."/>
            <person name="Secher A."/>
            <person name="Lage K."/>
            <person name="Nordsborg N.B."/>
            <person name="Dmytriyev A."/>
            <person name="Lundby C."/>
            <person name="Olsen J.V."/>
        </authorList>
    </citation>
    <scope>PHOSPHORYLATION [LARGE SCALE ANALYSIS] AT SER-205; SER-347; SER-349 AND SER-361</scope>
    <scope>IDENTIFICATION BY MASS SPECTROMETRY [LARGE SCALE ANALYSIS]</scope>
</reference>
<sequence>MSLAASAGRGPGTMWSPTHVQVTVLQARGLRAKGPGGTSDAYAVIQVGKEKYATSVSERSLGAPVWREEATFELPPLLSSGTAPAAAAATLQLTVLHRALLGLDKFLGRAEVDLRELHRDQSRRKKQWYTLKSKPGKKDKERGEIEVDIQFMRNNMTASMFDLSMKDKSRNPFGKLKDKIKGKNKDNTSDTASAIVPSTTPSVDSDDESFSKDKKKKSKIKTLFSKPSLQKTPLSQSMSVLPTSKPDKVLLRPGDFQSRWGDEGDNEDESSSASEVMSQKRTSSTDHTQPNQSNFSLPKKEGLSFLGGLRSKNDSLSRSNVCINGNHVYMEQPEAKSEIRESSPSNSPSPQGFRKRHLFSSTENLAARSPKEPGEGGGMSSDRRLSDSSTKDSMKSMSLPSYRPLTTADSREGLSPANMEVATKETKDSKKQESKKSSLLSLVTGKKDVAKGSEGEPLPPVSEKEKGRKGVLVEAQLREEDLVRRPEKDAVPVASQWGSSQNPFEDAQISDLEASVESKCEPKPPVPVPRTPQTRAVKPRPHPVKPMNTTAPKITNSSLGTATIISENLINEALMKKYQPSDPAFAYAQLTHDELIQLVLKQKETISKKEFQVRELEDYIDNLLVRVMEETPNILRVPAQTGKKAGKM</sequence>
<evidence type="ECO:0000250" key="1">
    <source>
        <dbReference type="UniProtKB" id="Q6WKZ4"/>
    </source>
</evidence>
<evidence type="ECO:0000250" key="2">
    <source>
        <dbReference type="UniProtKB" id="Q9D620"/>
    </source>
</evidence>
<evidence type="ECO:0000255" key="3">
    <source>
        <dbReference type="PROSITE-ProRule" id="PRU00041"/>
    </source>
</evidence>
<evidence type="ECO:0000255" key="4">
    <source>
        <dbReference type="PROSITE-ProRule" id="PRU00844"/>
    </source>
</evidence>
<evidence type="ECO:0000256" key="5">
    <source>
        <dbReference type="SAM" id="MobiDB-lite"/>
    </source>
</evidence>
<evidence type="ECO:0007744" key="6">
    <source>
    </source>
</evidence>
<organism>
    <name type="scientific">Rattus norvegicus</name>
    <name type="common">Rat</name>
    <dbReference type="NCBI Taxonomy" id="10116"/>
    <lineage>
        <taxon>Eukaryota</taxon>
        <taxon>Metazoa</taxon>
        <taxon>Chordata</taxon>
        <taxon>Craniata</taxon>
        <taxon>Vertebrata</taxon>
        <taxon>Euteleostomi</taxon>
        <taxon>Mammalia</taxon>
        <taxon>Eutheria</taxon>
        <taxon>Euarchontoglires</taxon>
        <taxon>Glires</taxon>
        <taxon>Rodentia</taxon>
        <taxon>Myomorpha</taxon>
        <taxon>Muroidea</taxon>
        <taxon>Muridae</taxon>
        <taxon>Murinae</taxon>
        <taxon>Rattus</taxon>
    </lineage>
</organism>
<proteinExistence type="evidence at protein level"/>